<name>LAEA_ASPFN</name>
<evidence type="ECO:0000250" key="1">
    <source>
        <dbReference type="UniProtKB" id="C8VQG9"/>
    </source>
</evidence>
<evidence type="ECO:0000256" key="2">
    <source>
        <dbReference type="SAM" id="MobiDB-lite"/>
    </source>
</evidence>
<evidence type="ECO:0000269" key="3">
    <source>
    </source>
</evidence>
<evidence type="ECO:0000269" key="4">
    <source>
    </source>
</evidence>
<evidence type="ECO:0000269" key="5">
    <source>
    </source>
</evidence>
<evidence type="ECO:0000269" key="6">
    <source>
    </source>
</evidence>
<evidence type="ECO:0000269" key="7">
    <source>
    </source>
</evidence>
<evidence type="ECO:0000269" key="8">
    <source>
    </source>
</evidence>
<evidence type="ECO:0000303" key="9">
    <source>
    </source>
</evidence>
<evidence type="ECO:0000305" key="10"/>
<accession>B8N406</accession>
<accession>Q2KNE4</accession>
<comment type="function">
    <text evidence="1 3 4 5">Methyltransferase that performs automethylation (By similarity). No other methyl-accepting substrate has been identified yet (By similarity). Component of the velvet transcription factor complex that acts as a global regulator for secondary metabolite gene expression. Required for aflR expression and subsequent aflatoxin production (PubMed:18667168, PubMed:19411623, PubMed:22289775, PubMed:24040154). Negatively regulates veA expression (PubMed:18667168, PubMed:19411623). Controls conidiophore and conidial development (PubMed:22289775, PubMed:24040154). Required for hydrophobin production which plays a role in cell surface hydrophobicity and host defense escape (PubMed:22289775).</text>
</comment>
<comment type="catalytic activity">
    <reaction evidence="1">
        <text>L-methionyl-[protein] + S-adenosyl-L-methionine = S-methyl-L-methionyl-[protein] + S-adenosyl-L-homocysteine</text>
        <dbReference type="Rhea" id="RHEA:60560"/>
        <dbReference type="Rhea" id="RHEA-COMP:12313"/>
        <dbReference type="Rhea" id="RHEA-COMP:15592"/>
        <dbReference type="ChEBI" id="CHEBI:16044"/>
        <dbReference type="ChEBI" id="CHEBI:57856"/>
        <dbReference type="ChEBI" id="CHEBI:59789"/>
        <dbReference type="ChEBI" id="CHEBI:142742"/>
    </reaction>
    <physiologicalReaction direction="left-to-right" evidence="1">
        <dbReference type="Rhea" id="RHEA:60561"/>
    </physiologicalReaction>
</comment>
<comment type="subunit">
    <text evidence="7">Component of the heterotrimeric velvet complex composed of laeA, veA and velB; VeA acting as a bridging protein between laeA and velB (PubMed:23994319). Interacts directly with veA (PubMed:23994319).</text>
</comment>
<comment type="subcellular location">
    <subcellularLocation>
        <location evidence="1">Nucleus</location>
    </subcellularLocation>
</comment>
<comment type="induction">
    <text evidence="6">Expression is regulated by the developmental regulators flbB and flbE (PubMed:23676908).</text>
</comment>
<comment type="disruption phenotype">
    <text evidence="3 4 5 8">Leads to decreased conidial production, loss of sclerotia, and altered in host colonization (PubMed:18667168, PubMed:19411623, PubMed:22289775, PubMed:24040154). Reduces expression of hydrophobins rodA and rodB, resulting in a decrease of colony hydrophobicity (PubMed:22289775). Impairs expression of aflR (PubMed:19411623). Abolishes production of aflatoxin (PubMed:22289775, PubMed:24040154). Leads to down-regulation of nitrate metabolic genes (PubMed:24040154). Prevents metabolization of host cell lipid reserves and is inhibited by oleic acid in growth assays (PubMed:19411623).</text>
</comment>
<comment type="similarity">
    <text evidence="10">Belongs to the methyltransferase superfamily. LaeA methyltransferase family.</text>
</comment>
<comment type="sequence caution" evidence="10">
    <conflict type="erroneous gene model prediction">
        <sequence resource="EMBL-CDS" id="EED56057"/>
    </conflict>
</comment>
<keyword id="KW-0489">Methyltransferase</keyword>
<keyword id="KW-0539">Nucleus</keyword>
<keyword id="KW-0949">S-adenosyl-L-methionine</keyword>
<keyword id="KW-0749">Sporulation</keyword>
<keyword id="KW-0804">Transcription</keyword>
<keyword id="KW-0805">Transcription regulation</keyword>
<keyword id="KW-0808">Transferase</keyword>
<keyword id="KW-0843">Virulence</keyword>
<sequence length="369" mass="42659">MFGNGQTGQRLPAMASPPHDSYYSQSLASSRSRNNSDAMDIYAITDRDPPAREPSGYSQWYRNGSPSVNSIHSKSSEKQPFYEENGRMYHAYRKGVYMLPCDEQEQDRLDIFHKLFTVARVSDGLMYAPHPRNGRFLDLGCGTGIWAIDVANKYPDAFVVGVDLAPIQPSNHPKNCEFYAPFDFESPWAMGEDSWDLIHLQMGCGSVMGWPNLYRRIFAHLRPGAWFEQVEIDFEPRCDDRPLEGLAIRQWYQYLKQATQDAMRPINHNSRDTIRDLQEAGFTDIDHQMVGLPLNPWHQDEHERKVARWYNLAVSESIESLSMAPFSRIFNWDLDRIRRISSEVKSEAFNKEIHAYNILHIYQARKPAN</sequence>
<proteinExistence type="evidence at protein level"/>
<protein>
    <recommendedName>
        <fullName evidence="10">Secondary metabolism regulator laeA</fullName>
    </recommendedName>
    <alternativeName>
        <fullName evidence="10">Methyltransferase laeA</fullName>
        <ecNumber evidence="1">2.1.1.-</ecNumber>
    </alternativeName>
    <alternativeName>
        <fullName evidence="10">Velvet complex subunit laeA</fullName>
    </alternativeName>
</protein>
<organism>
    <name type="scientific">Aspergillus flavus (strain ATCC 200026 / FGSC A1120 / IAM 13836 / NRRL 3357 / JCM 12722 / SRRC 167)</name>
    <dbReference type="NCBI Taxonomy" id="332952"/>
    <lineage>
        <taxon>Eukaryota</taxon>
        <taxon>Fungi</taxon>
        <taxon>Dikarya</taxon>
        <taxon>Ascomycota</taxon>
        <taxon>Pezizomycotina</taxon>
        <taxon>Eurotiomycetes</taxon>
        <taxon>Eurotiomycetidae</taxon>
        <taxon>Eurotiales</taxon>
        <taxon>Aspergillaceae</taxon>
        <taxon>Aspergillus</taxon>
        <taxon>Aspergillus subgen. Circumdati</taxon>
    </lineage>
</organism>
<dbReference type="EC" id="2.1.1.-" evidence="1"/>
<dbReference type="EMBL" id="AY883016">
    <property type="protein sequence ID" value="AAX68412.1"/>
    <property type="molecule type" value="Genomic_DNA"/>
</dbReference>
<dbReference type="EMBL" id="EQ963473">
    <property type="protein sequence ID" value="EED56057.1"/>
    <property type="status" value="ALT_SEQ"/>
    <property type="molecule type" value="Genomic_DNA"/>
</dbReference>
<dbReference type="RefSeq" id="XP_002374839.1">
    <property type="nucleotide sequence ID" value="XM_002374798.1"/>
</dbReference>
<dbReference type="SMR" id="B8N406"/>
<dbReference type="STRING" id="332952.B8N406"/>
<dbReference type="EnsemblFungi" id="EED56057">
    <property type="protein sequence ID" value="EED56057"/>
    <property type="gene ID" value="AFLA_033290"/>
</dbReference>
<dbReference type="VEuPathDB" id="FungiDB:AFLA_001200"/>
<dbReference type="eggNOG" id="ENOG502QQMC">
    <property type="taxonomic scope" value="Eukaryota"/>
</dbReference>
<dbReference type="HOGENOM" id="CLU_010595_2_0_1"/>
<dbReference type="PHI-base" id="PHI:3881"/>
<dbReference type="GO" id="GO:0005634">
    <property type="term" value="C:nucleus"/>
    <property type="evidence" value="ECO:0007669"/>
    <property type="project" value="UniProtKB-SubCell"/>
</dbReference>
<dbReference type="GO" id="GO:0008168">
    <property type="term" value="F:methyltransferase activity"/>
    <property type="evidence" value="ECO:0007669"/>
    <property type="project" value="UniProtKB-KW"/>
</dbReference>
<dbReference type="GO" id="GO:0032259">
    <property type="term" value="P:methylation"/>
    <property type="evidence" value="ECO:0007669"/>
    <property type="project" value="UniProtKB-KW"/>
</dbReference>
<dbReference type="GO" id="GO:0030435">
    <property type="term" value="P:sporulation resulting in formation of a cellular spore"/>
    <property type="evidence" value="ECO:0007669"/>
    <property type="project" value="UniProtKB-KW"/>
</dbReference>
<dbReference type="CDD" id="cd02440">
    <property type="entry name" value="AdoMet_MTases"/>
    <property type="match status" value="1"/>
</dbReference>
<dbReference type="Gene3D" id="3.40.50.150">
    <property type="entry name" value="Vaccinia Virus protein VP39"/>
    <property type="match status" value="1"/>
</dbReference>
<dbReference type="InterPro" id="IPR029063">
    <property type="entry name" value="SAM-dependent_MTases_sf"/>
</dbReference>
<dbReference type="PANTHER" id="PTHR43591">
    <property type="entry name" value="METHYLTRANSFERASE"/>
    <property type="match status" value="1"/>
</dbReference>
<dbReference type="PANTHER" id="PTHR43591:SF30">
    <property type="entry name" value="PROTEIN-METHIONINE METHYLTRANSFERASE LAEA"/>
    <property type="match status" value="1"/>
</dbReference>
<dbReference type="Pfam" id="PF13489">
    <property type="entry name" value="Methyltransf_23"/>
    <property type="match status" value="1"/>
</dbReference>
<dbReference type="SUPFAM" id="SSF53335">
    <property type="entry name" value="S-adenosyl-L-methionine-dependent methyltransferases"/>
    <property type="match status" value="1"/>
</dbReference>
<gene>
    <name evidence="9" type="primary">laeA</name>
    <name type="ORF">AFLA_033290</name>
</gene>
<feature type="chain" id="PRO_0000435744" description="Secondary metabolism regulator laeA">
    <location>
        <begin position="1"/>
        <end position="369"/>
    </location>
</feature>
<feature type="region of interest" description="Disordered" evidence="2">
    <location>
        <begin position="1"/>
        <end position="37"/>
    </location>
</feature>
<feature type="compositionally biased region" description="Low complexity" evidence="2">
    <location>
        <begin position="20"/>
        <end position="37"/>
    </location>
</feature>
<reference key="1">
    <citation type="submission" date="2005-01" db="EMBL/GenBank/DDBJ databases">
        <authorList>
            <person name="Wilkinson J.R."/>
        </authorList>
    </citation>
    <scope>NUCLEOTIDE SEQUENCE [GENOMIC DNA]</scope>
    <source>
        <strain>ATCC 200026 / FGSC A1120 / IAM 13836 / NRRL 3357 / JCM 12722 / SRRC 167</strain>
    </source>
</reference>
<reference key="2">
    <citation type="journal article" date="2015" name="Genome Announc.">
        <title>Genome sequence of Aspergillus flavus NRRL 3357, a strain that causes aflatoxin contamination of food and feed.</title>
        <authorList>
            <person name="Nierman W.C."/>
            <person name="Yu J."/>
            <person name="Fedorova-Abrams N.D."/>
            <person name="Losada L."/>
            <person name="Cleveland T.E."/>
            <person name="Bhatnagar D."/>
            <person name="Bennett J.W."/>
            <person name="Dean R."/>
            <person name="Payne G.A."/>
        </authorList>
    </citation>
    <scope>NUCLEOTIDE SEQUENCE [LARGE SCALE GENOMIC DNA]</scope>
    <source>
        <strain>ATCC 200026 / FGSC A1120 / IAM 13836 / NRRL 3357 / JCM 12722 / SRRC 167</strain>
    </source>
</reference>
<reference key="3">
    <citation type="journal article" date="2008" name="Fungal Genet. Biol.">
        <title>Requirement of LaeA for secondary metabolism and sclerotial production in Aspergillus flavus.</title>
        <authorList>
            <person name="Kale S.P."/>
            <person name="Milde L."/>
            <person name="Trapp M.K."/>
            <person name="Frisvad J.C."/>
            <person name="Keller N.P."/>
            <person name="Bok J.W."/>
        </authorList>
    </citation>
    <scope>FUNCTION</scope>
    <scope>DISRUPTION PHENOTYPE</scope>
</reference>
<reference key="4">
    <citation type="journal article" date="2009" name="Eukaryot. Cell">
        <title>Distinct roles for VeA and LaeA in development and pathogenesis of Aspergillus flavus.</title>
        <authorList>
            <person name="Amaike S."/>
            <person name="Keller N.P."/>
        </authorList>
    </citation>
    <scope>FUNCTION</scope>
    <scope>DISRUPTION PHENOTYPE</scope>
    <scope>INDUCTION</scope>
</reference>
<reference key="5">
    <citation type="journal article" date="2012" name="Fungal Biol.">
        <title>Effects of laeA deletion on Aspergillus flavus conidial development and hydrophobicity may contribute to loss of aflatoxin production.</title>
        <authorList>
            <person name="Chang P.K."/>
            <person name="Scharfenstein L.L."/>
            <person name="Ehrlich K.C."/>
            <person name="Wei Q."/>
            <person name="Bhatnagar D."/>
            <person name="Ingber B.F."/>
        </authorList>
    </citation>
    <scope>FUNCTION</scope>
    <scope>DISRUPTION PHENOTYPE</scope>
</reference>
<reference key="6">
    <citation type="journal article" date="2013" name="Fungal Genet. Biol.">
        <title>Aspergillus flavus VelB acts distinctly from VeA in conidiation and may coordinate with FluG to modulate sclerotial production.</title>
        <authorList>
            <person name="Chang P.K."/>
            <person name="Scharfenstein L.L."/>
            <person name="Li P."/>
            <person name="Ehrlich K.C."/>
        </authorList>
    </citation>
    <scope>IDENTIFICATION IN THE VELVET COMPLEX</scope>
    <scope>INTERACTION WITH VEA</scope>
</reference>
<reference key="7">
    <citation type="journal article" date="2013" name="J. Microbiol. Biotechnol.">
        <title>The developmental regulators, FlbB and FlbE, are involved in the virulence of Aspergillus fumigatus.</title>
        <authorList>
            <person name="Kim S.S."/>
            <person name="Kim Y.H."/>
            <person name="Shin K.S."/>
        </authorList>
    </citation>
    <scope>INDUCTION</scope>
</reference>
<reference key="8">
    <citation type="journal article" date="2013" name="PLoS ONE">
        <title>The bZIP protein MeaB mediates virulence attributes in Aspergillus flavus.</title>
        <authorList>
            <person name="Amaike S."/>
            <person name="Affeldt K.J."/>
            <person name="Yin W.B."/>
            <person name="Franke S."/>
            <person name="Choithani A."/>
            <person name="Keller N.P."/>
        </authorList>
    </citation>
    <scope>FUNCTION</scope>
    <scope>DISRUPTION PHENOTYPE</scope>
</reference>